<sequence>MRRFFWLVAAALLLAGCAGEKGIVEKEGYQLDTRRQAQAAYPRIKVLVIHYTADDFDSSLATLTDKQVSSHYLVPAVPPRYNGKPRIWQLVPEQELAWHAGISAWRGATRLNDTSIGIELENRGWQKSAGVKYFAPFEPAQIQALIPLAKDIIARYHIKPENVVAHADIAPQRKDDPGPLFPWQQLAQQGIGAWPDAQRVNFYLAGRAPHTPVDTASLLELLARYGYDVKPDMTPREQRRVIMAFQMHFRPTLYNGEADAETQAIAEALLEKYGQD</sequence>
<feature type="signal peptide" evidence="2">
    <location>
        <begin position="1"/>
        <end position="16"/>
    </location>
</feature>
<feature type="chain" id="PRO_0000164417" description="N-acetylmuramoyl-L-alanine amidase AmiD">
    <location>
        <begin position="17"/>
        <end position="276"/>
    </location>
</feature>
<feature type="domain" description="N-acetylmuramoyl-L-alanine amidase" evidence="1">
    <location>
        <begin position="42"/>
        <end position="179"/>
    </location>
</feature>
<feature type="active site" description="Proton acceptor" evidence="3">
    <location>
        <position position="119"/>
    </location>
</feature>
<feature type="binding site" evidence="3">
    <location>
        <position position="50"/>
    </location>
    <ligand>
        <name>Zn(2+)</name>
        <dbReference type="ChEBI" id="CHEBI:29105"/>
        <note>catalytic</note>
    </ligand>
</feature>
<feature type="binding site">
    <location>
        <begin position="51"/>
        <end position="52"/>
    </location>
    <ligand>
        <name>substrate</name>
    </ligand>
</feature>
<feature type="binding site" evidence="3">
    <location>
        <position position="166"/>
    </location>
    <ligand>
        <name>Zn(2+)</name>
        <dbReference type="ChEBI" id="CHEBI:29105"/>
        <note>catalytic</note>
    </ligand>
</feature>
<feature type="binding site" evidence="3">
    <location>
        <position position="176"/>
    </location>
    <ligand>
        <name>Zn(2+)</name>
        <dbReference type="ChEBI" id="CHEBI:29105"/>
        <note>catalytic</note>
    </ligand>
</feature>
<feature type="site" description="Transition state stabilizer" evidence="3">
    <location>
        <position position="174"/>
    </location>
</feature>
<feature type="lipid moiety-binding region" description="N-palmitoyl cysteine" evidence="2">
    <location>
        <position position="17"/>
    </location>
</feature>
<feature type="lipid moiety-binding region" description="S-diacylglycerol cysteine" evidence="2">
    <location>
        <position position="17"/>
    </location>
</feature>
<feature type="strand" evidence="5">
    <location>
        <begin position="23"/>
        <end position="25"/>
    </location>
</feature>
<feature type="strand" evidence="5">
    <location>
        <begin position="30"/>
        <end position="32"/>
    </location>
</feature>
<feature type="strand" evidence="5">
    <location>
        <begin position="46"/>
        <end position="51"/>
    </location>
</feature>
<feature type="helix" evidence="5">
    <location>
        <begin position="56"/>
        <end position="63"/>
    </location>
</feature>
<feature type="strand" evidence="5">
    <location>
        <begin position="65"/>
        <end position="67"/>
    </location>
</feature>
<feature type="strand" evidence="5">
    <location>
        <begin position="71"/>
        <end position="74"/>
    </location>
</feature>
<feature type="helix" evidence="5">
    <location>
        <begin position="111"/>
        <end position="114"/>
    </location>
</feature>
<feature type="strand" evidence="5">
    <location>
        <begin position="115"/>
        <end position="120"/>
    </location>
</feature>
<feature type="strand" evidence="5">
    <location>
        <begin position="125"/>
        <end position="128"/>
    </location>
</feature>
<feature type="strand" evidence="5">
    <location>
        <begin position="131"/>
        <end position="134"/>
    </location>
</feature>
<feature type="helix" evidence="5">
    <location>
        <begin position="139"/>
        <end position="156"/>
    </location>
</feature>
<feature type="helix" evidence="5">
    <location>
        <begin position="160"/>
        <end position="162"/>
    </location>
</feature>
<feature type="strand" evidence="5">
    <location>
        <begin position="163"/>
        <end position="165"/>
    </location>
</feature>
<feature type="helix" evidence="5">
    <location>
        <begin position="166"/>
        <end position="169"/>
    </location>
</feature>
<feature type="turn" evidence="5">
    <location>
        <begin position="171"/>
        <end position="173"/>
    </location>
</feature>
<feature type="helix" evidence="5">
    <location>
        <begin position="183"/>
        <end position="188"/>
    </location>
</feature>
<feature type="helix" evidence="5">
    <location>
        <begin position="197"/>
        <end position="204"/>
    </location>
</feature>
<feature type="helix" evidence="5">
    <location>
        <begin position="215"/>
        <end position="225"/>
    </location>
</feature>
<feature type="helix" evidence="5">
    <location>
        <begin position="235"/>
        <end position="249"/>
    </location>
</feature>
<feature type="helix" evidence="5">
    <location>
        <begin position="260"/>
        <end position="273"/>
    </location>
</feature>
<evidence type="ECO:0000255" key="1"/>
<evidence type="ECO:0000255" key="2">
    <source>
        <dbReference type="PROSITE-ProRule" id="PRU00303"/>
    </source>
</evidence>
<evidence type="ECO:0000269" key="3">
    <source>
    </source>
</evidence>
<evidence type="ECO:0000305" key="4"/>
<evidence type="ECO:0007829" key="5">
    <source>
        <dbReference type="PDB" id="3D2Y"/>
    </source>
</evidence>
<protein>
    <recommendedName>
        <fullName>N-acetylmuramoyl-L-alanine amidase AmiD</fullName>
        <ecNumber>3.5.1.28</ecNumber>
    </recommendedName>
</protein>
<organism>
    <name type="scientific">Escherichia coli (strain K12)</name>
    <dbReference type="NCBI Taxonomy" id="83333"/>
    <lineage>
        <taxon>Bacteria</taxon>
        <taxon>Pseudomonadati</taxon>
        <taxon>Pseudomonadota</taxon>
        <taxon>Gammaproteobacteria</taxon>
        <taxon>Enterobacterales</taxon>
        <taxon>Enterobacteriaceae</taxon>
        <taxon>Escherichia</taxon>
    </lineage>
</organism>
<comment type="catalytic activity">
    <reaction>
        <text>Hydrolyzes the link between N-acetylmuramoyl residues and L-amino acid residues in certain cell-wall glycopeptides.</text>
        <dbReference type="EC" id="3.5.1.28"/>
    </reaction>
</comment>
<comment type="cofactor">
    <cofactor evidence="3">
        <name>Zn(2+)</name>
        <dbReference type="ChEBI" id="CHEBI:29105"/>
    </cofactor>
    <text evidence="3">Binds 1 zinc ion per subunit.</text>
</comment>
<comment type="subcellular location">
    <subcellularLocation>
        <location evidence="4">Cell outer membrane</location>
        <topology evidence="4">Lipid-anchor</topology>
    </subcellularLocation>
</comment>
<comment type="similarity">
    <text evidence="4">Belongs to the N-acetylmuramoyl-L-alanine amidase 2 family.</text>
</comment>
<gene>
    <name type="primary">amiD</name>
    <name type="synonym">ybjR</name>
    <name type="ordered locus">b0867</name>
    <name type="ordered locus">JW0851</name>
</gene>
<accession>P75820</accession>
<proteinExistence type="evidence at protein level"/>
<dbReference type="EC" id="3.5.1.28"/>
<dbReference type="EMBL" id="U00096">
    <property type="protein sequence ID" value="AAC73954.1"/>
    <property type="molecule type" value="Genomic_DNA"/>
</dbReference>
<dbReference type="EMBL" id="AP009048">
    <property type="protein sequence ID" value="BAA35581.1"/>
    <property type="molecule type" value="Genomic_DNA"/>
</dbReference>
<dbReference type="PIR" id="C64825">
    <property type="entry name" value="C64825"/>
</dbReference>
<dbReference type="RefSeq" id="NP_415388.1">
    <property type="nucleotide sequence ID" value="NC_000913.3"/>
</dbReference>
<dbReference type="RefSeq" id="WP_001252135.1">
    <property type="nucleotide sequence ID" value="NZ_SSZK01000002.1"/>
</dbReference>
<dbReference type="PDB" id="2BH7">
    <property type="method" value="X-ray"/>
    <property type="resolution" value="2.20 A"/>
    <property type="chains" value="A=18-276"/>
</dbReference>
<dbReference type="PDB" id="2WKX">
    <property type="method" value="X-ray"/>
    <property type="resolution" value="1.80 A"/>
    <property type="chains" value="A=18-276"/>
</dbReference>
<dbReference type="PDB" id="3D2Y">
    <property type="method" value="X-ray"/>
    <property type="resolution" value="1.75 A"/>
    <property type="chains" value="A=18-276"/>
</dbReference>
<dbReference type="PDB" id="3D2Z">
    <property type="method" value="X-ray"/>
    <property type="resolution" value="2.80 A"/>
    <property type="chains" value="A=18-276"/>
</dbReference>
<dbReference type="PDBsum" id="2BH7"/>
<dbReference type="PDBsum" id="2WKX"/>
<dbReference type="PDBsum" id="3D2Y"/>
<dbReference type="PDBsum" id="3D2Z"/>
<dbReference type="SMR" id="P75820"/>
<dbReference type="BioGRID" id="4259998">
    <property type="interactions" value="12"/>
</dbReference>
<dbReference type="FunCoup" id="P75820">
    <property type="interactions" value="21"/>
</dbReference>
<dbReference type="STRING" id="511145.b0867"/>
<dbReference type="jPOST" id="P75820"/>
<dbReference type="PaxDb" id="511145-b0867"/>
<dbReference type="EnsemblBacteria" id="AAC73954">
    <property type="protein sequence ID" value="AAC73954"/>
    <property type="gene ID" value="b0867"/>
</dbReference>
<dbReference type="GeneID" id="945494"/>
<dbReference type="KEGG" id="ecj:JW0851"/>
<dbReference type="KEGG" id="eco:b0867"/>
<dbReference type="KEGG" id="ecoc:C3026_05395"/>
<dbReference type="PATRIC" id="fig|1411691.4.peg.1410"/>
<dbReference type="EchoBASE" id="EB3451"/>
<dbReference type="eggNOG" id="COG3023">
    <property type="taxonomic scope" value="Bacteria"/>
</dbReference>
<dbReference type="HOGENOM" id="CLU_049290_2_1_6"/>
<dbReference type="InParanoid" id="P75820"/>
<dbReference type="OMA" id="DTRHPAQ"/>
<dbReference type="OrthoDB" id="9794842at2"/>
<dbReference type="PhylomeDB" id="P75820"/>
<dbReference type="BioCyc" id="EcoCyc:G6452-MONOMER"/>
<dbReference type="BioCyc" id="MetaCyc:G6452-MONOMER"/>
<dbReference type="BRENDA" id="3.5.1.28">
    <property type="organism ID" value="2026"/>
</dbReference>
<dbReference type="EvolutionaryTrace" id="P75820"/>
<dbReference type="PRO" id="PR:P75820"/>
<dbReference type="Proteomes" id="UP000000625">
    <property type="component" value="Chromosome"/>
</dbReference>
<dbReference type="GO" id="GO:0009279">
    <property type="term" value="C:cell outer membrane"/>
    <property type="evidence" value="ECO:0007669"/>
    <property type="project" value="UniProtKB-SubCell"/>
</dbReference>
<dbReference type="GO" id="GO:0019867">
    <property type="term" value="C:outer membrane"/>
    <property type="evidence" value="ECO:0000314"/>
    <property type="project" value="EcoliWiki"/>
</dbReference>
<dbReference type="GO" id="GO:0009392">
    <property type="term" value="F:N-acetyl-anhydromuramoyl-L-alanine amidase activity"/>
    <property type="evidence" value="ECO:0000314"/>
    <property type="project" value="EcoCyc"/>
</dbReference>
<dbReference type="GO" id="GO:0008745">
    <property type="term" value="F:N-acetylmuramoyl-L-alanine amidase activity"/>
    <property type="evidence" value="ECO:0000314"/>
    <property type="project" value="EcoCyc"/>
</dbReference>
<dbReference type="GO" id="GO:0008270">
    <property type="term" value="F:zinc ion binding"/>
    <property type="evidence" value="ECO:0000314"/>
    <property type="project" value="EcoliWiki"/>
</dbReference>
<dbReference type="GO" id="GO:0071555">
    <property type="term" value="P:cell wall organization"/>
    <property type="evidence" value="ECO:0007669"/>
    <property type="project" value="UniProtKB-KW"/>
</dbReference>
<dbReference type="GO" id="GO:0009253">
    <property type="term" value="P:peptidoglycan catabolic process"/>
    <property type="evidence" value="ECO:0000314"/>
    <property type="project" value="EcoCyc"/>
</dbReference>
<dbReference type="GO" id="GO:0009254">
    <property type="term" value="P:peptidoglycan turnover"/>
    <property type="evidence" value="ECO:0000318"/>
    <property type="project" value="GO_Central"/>
</dbReference>
<dbReference type="CDD" id="cd06583">
    <property type="entry name" value="PGRP"/>
    <property type="match status" value="1"/>
</dbReference>
<dbReference type="FunFam" id="3.40.80.10:FF:000003">
    <property type="entry name" value="N-acetylmuramoyl-L-alanine amidase"/>
    <property type="match status" value="1"/>
</dbReference>
<dbReference type="Gene3D" id="6.20.370.150">
    <property type="match status" value="1"/>
</dbReference>
<dbReference type="Gene3D" id="3.40.80.10">
    <property type="entry name" value="Peptidoglycan recognition protein-like"/>
    <property type="match status" value="1"/>
</dbReference>
<dbReference type="Gene3D" id="1.10.101.10">
    <property type="entry name" value="PGBD-like superfamily/PGBD"/>
    <property type="match status" value="1"/>
</dbReference>
<dbReference type="InterPro" id="IPR036505">
    <property type="entry name" value="Amidase/PGRP_sf"/>
</dbReference>
<dbReference type="InterPro" id="IPR002502">
    <property type="entry name" value="Amidase_domain"/>
</dbReference>
<dbReference type="InterPro" id="IPR051206">
    <property type="entry name" value="NAMLAA_amidase_2"/>
</dbReference>
<dbReference type="InterPro" id="IPR036365">
    <property type="entry name" value="PGBD-like_sf"/>
</dbReference>
<dbReference type="InterPro" id="IPR036366">
    <property type="entry name" value="PGBDSf"/>
</dbReference>
<dbReference type="PANTHER" id="PTHR30417">
    <property type="entry name" value="N-ACETYLMURAMOYL-L-ALANINE AMIDASE AMID"/>
    <property type="match status" value="1"/>
</dbReference>
<dbReference type="PANTHER" id="PTHR30417:SF1">
    <property type="entry name" value="N-ACETYLMURAMOYL-L-ALANINE AMIDASE AMID"/>
    <property type="match status" value="1"/>
</dbReference>
<dbReference type="Pfam" id="PF01510">
    <property type="entry name" value="Amidase_2"/>
    <property type="match status" value="1"/>
</dbReference>
<dbReference type="SMART" id="SM00644">
    <property type="entry name" value="Ami_2"/>
    <property type="match status" value="1"/>
</dbReference>
<dbReference type="SUPFAM" id="SSF55846">
    <property type="entry name" value="N-acetylmuramoyl-L-alanine amidase-like"/>
    <property type="match status" value="1"/>
</dbReference>
<dbReference type="SUPFAM" id="SSF47090">
    <property type="entry name" value="PGBD-like"/>
    <property type="match status" value="1"/>
</dbReference>
<dbReference type="PROSITE" id="PS51257">
    <property type="entry name" value="PROKAR_LIPOPROTEIN"/>
    <property type="match status" value="1"/>
</dbReference>
<reference key="1">
    <citation type="journal article" date="1996" name="DNA Res.">
        <title>A 718-kb DNA sequence of the Escherichia coli K-12 genome corresponding to the 12.7-28.0 min region on the linkage map.</title>
        <authorList>
            <person name="Oshima T."/>
            <person name="Aiba H."/>
            <person name="Baba T."/>
            <person name="Fujita K."/>
            <person name="Hayashi K."/>
            <person name="Honjo A."/>
            <person name="Ikemoto K."/>
            <person name="Inada T."/>
            <person name="Itoh T."/>
            <person name="Kajihara M."/>
            <person name="Kanai K."/>
            <person name="Kashimoto K."/>
            <person name="Kimura S."/>
            <person name="Kitagawa M."/>
            <person name="Makino K."/>
            <person name="Masuda S."/>
            <person name="Miki T."/>
            <person name="Mizobuchi K."/>
            <person name="Mori H."/>
            <person name="Motomura K."/>
            <person name="Nakamura Y."/>
            <person name="Nashimoto H."/>
            <person name="Nishio Y."/>
            <person name="Saito N."/>
            <person name="Sampei G."/>
            <person name="Seki Y."/>
            <person name="Tagami H."/>
            <person name="Takemoto K."/>
            <person name="Wada C."/>
            <person name="Yamamoto Y."/>
            <person name="Yano M."/>
            <person name="Horiuchi T."/>
        </authorList>
    </citation>
    <scope>NUCLEOTIDE SEQUENCE [LARGE SCALE GENOMIC DNA]</scope>
    <source>
        <strain>K12 / W3110 / ATCC 27325 / DSM 5911</strain>
    </source>
</reference>
<reference key="2">
    <citation type="journal article" date="1997" name="Science">
        <title>The complete genome sequence of Escherichia coli K-12.</title>
        <authorList>
            <person name="Blattner F.R."/>
            <person name="Plunkett G. III"/>
            <person name="Bloch C.A."/>
            <person name="Perna N.T."/>
            <person name="Burland V."/>
            <person name="Riley M."/>
            <person name="Collado-Vides J."/>
            <person name="Glasner J.D."/>
            <person name="Rode C.K."/>
            <person name="Mayhew G.F."/>
            <person name="Gregor J."/>
            <person name="Davis N.W."/>
            <person name="Kirkpatrick H.A."/>
            <person name="Goeden M.A."/>
            <person name="Rose D.J."/>
            <person name="Mau B."/>
            <person name="Shao Y."/>
        </authorList>
    </citation>
    <scope>NUCLEOTIDE SEQUENCE [LARGE SCALE GENOMIC DNA]</scope>
    <source>
        <strain>K12 / MG1655 / ATCC 47076</strain>
    </source>
</reference>
<reference key="3">
    <citation type="journal article" date="2006" name="Mol. Syst. Biol.">
        <title>Highly accurate genome sequences of Escherichia coli K-12 strains MG1655 and W3110.</title>
        <authorList>
            <person name="Hayashi K."/>
            <person name="Morooka N."/>
            <person name="Yamamoto Y."/>
            <person name="Fujita K."/>
            <person name="Isono K."/>
            <person name="Choi S."/>
            <person name="Ohtsubo E."/>
            <person name="Baba T."/>
            <person name="Wanner B.L."/>
            <person name="Mori H."/>
            <person name="Horiuchi T."/>
        </authorList>
    </citation>
    <scope>NUCLEOTIDE SEQUENCE [LARGE SCALE GENOMIC DNA]</scope>
    <source>
        <strain>K12 / W3110 / ATCC 27325 / DSM 5911</strain>
    </source>
</reference>
<reference key="4">
    <citation type="journal article" date="2010" name="J. Mol. Biol.">
        <title>Specific structural features of the N-acetylmuramoyl-L-alanine amidase AmiD from Escherichia coli and mechanistic implications for enzymes of this family.</title>
        <authorList>
            <person name="Kerff F."/>
            <person name="Petrella S."/>
            <person name="Mercier F."/>
            <person name="Sauvage E."/>
            <person name="Herman R."/>
            <person name="Pennartz A."/>
            <person name="Zervosen A."/>
            <person name="Luxen A."/>
            <person name="Frere J.M."/>
            <person name="Joris B."/>
            <person name="Charlier P."/>
        </authorList>
    </citation>
    <scope>X-RAY CRYSTALLOGRAPHY (1.75 ANGSTROMS) OF 18-276 IN COMPLEX WITH ZINC AND N-ACETYLMURAMOYL-TRIPEPTIDE</scope>
    <scope>COFACTOR</scope>
    <scope>ACTIVE SITE</scope>
</reference>
<keyword id="KW-0002">3D-structure</keyword>
<keyword id="KW-0998">Cell outer membrane</keyword>
<keyword id="KW-0961">Cell wall biogenesis/degradation</keyword>
<keyword id="KW-0378">Hydrolase</keyword>
<keyword id="KW-0449">Lipoprotein</keyword>
<keyword id="KW-0472">Membrane</keyword>
<keyword id="KW-0479">Metal-binding</keyword>
<keyword id="KW-0564">Palmitate</keyword>
<keyword id="KW-1185">Reference proteome</keyword>
<keyword id="KW-0732">Signal</keyword>
<keyword id="KW-0862">Zinc</keyword>
<name>AMID_ECOLI</name>